<feature type="chain" id="PRO_1000009345" description="Leucine--tRNA ligase">
    <location>
        <begin position="1"/>
        <end position="813"/>
    </location>
</feature>
<feature type="short sequence motif" description="'HIGH' region">
    <location>
        <begin position="41"/>
        <end position="51"/>
    </location>
</feature>
<feature type="short sequence motif" description="'KMSKS' region">
    <location>
        <begin position="575"/>
        <end position="579"/>
    </location>
</feature>
<feature type="binding site" evidence="1">
    <location>
        <position position="578"/>
    </location>
    <ligand>
        <name>ATP</name>
        <dbReference type="ChEBI" id="CHEBI:30616"/>
    </ligand>
</feature>
<proteinExistence type="inferred from homology"/>
<dbReference type="EC" id="6.1.1.4" evidence="1"/>
<dbReference type="EMBL" id="CP000608">
    <property type="protein sequence ID" value="ABO46742.1"/>
    <property type="molecule type" value="Genomic_DNA"/>
</dbReference>
<dbReference type="RefSeq" id="WP_003026063.1">
    <property type="nucleotide sequence ID" value="NC_009257.1"/>
</dbReference>
<dbReference type="SMR" id="A4IXU1"/>
<dbReference type="KEGG" id="ftw:FTW_0897"/>
<dbReference type="HOGENOM" id="CLU_004427_0_0_6"/>
<dbReference type="GO" id="GO:0005829">
    <property type="term" value="C:cytosol"/>
    <property type="evidence" value="ECO:0007669"/>
    <property type="project" value="TreeGrafter"/>
</dbReference>
<dbReference type="GO" id="GO:0002161">
    <property type="term" value="F:aminoacyl-tRNA deacylase activity"/>
    <property type="evidence" value="ECO:0007669"/>
    <property type="project" value="InterPro"/>
</dbReference>
<dbReference type="GO" id="GO:0005524">
    <property type="term" value="F:ATP binding"/>
    <property type="evidence" value="ECO:0007669"/>
    <property type="project" value="UniProtKB-UniRule"/>
</dbReference>
<dbReference type="GO" id="GO:0004823">
    <property type="term" value="F:leucine-tRNA ligase activity"/>
    <property type="evidence" value="ECO:0007669"/>
    <property type="project" value="UniProtKB-UniRule"/>
</dbReference>
<dbReference type="GO" id="GO:0006429">
    <property type="term" value="P:leucyl-tRNA aminoacylation"/>
    <property type="evidence" value="ECO:0007669"/>
    <property type="project" value="UniProtKB-UniRule"/>
</dbReference>
<dbReference type="CDD" id="cd07958">
    <property type="entry name" value="Anticodon_Ia_Leu_BEm"/>
    <property type="match status" value="1"/>
</dbReference>
<dbReference type="CDD" id="cd00812">
    <property type="entry name" value="LeuRS_core"/>
    <property type="match status" value="1"/>
</dbReference>
<dbReference type="FunFam" id="1.10.730.10:FF:000002">
    <property type="entry name" value="Leucine--tRNA ligase"/>
    <property type="match status" value="1"/>
</dbReference>
<dbReference type="FunFam" id="3.10.20.590:FF:000001">
    <property type="entry name" value="Leucine--tRNA ligase"/>
    <property type="match status" value="1"/>
</dbReference>
<dbReference type="FunFam" id="3.40.50.620:FF:000056">
    <property type="entry name" value="Leucine--tRNA ligase"/>
    <property type="match status" value="1"/>
</dbReference>
<dbReference type="FunFam" id="3.40.50.620:FF:000395">
    <property type="entry name" value="Leucine--tRNA ligase"/>
    <property type="match status" value="1"/>
</dbReference>
<dbReference type="Gene3D" id="3.10.20.590">
    <property type="match status" value="1"/>
</dbReference>
<dbReference type="Gene3D" id="3.40.50.620">
    <property type="entry name" value="HUPs"/>
    <property type="match status" value="2"/>
</dbReference>
<dbReference type="Gene3D" id="1.10.730.10">
    <property type="entry name" value="Isoleucyl-tRNA Synthetase, Domain 1"/>
    <property type="match status" value="1"/>
</dbReference>
<dbReference type="HAMAP" id="MF_00049_B">
    <property type="entry name" value="Leu_tRNA_synth_B"/>
    <property type="match status" value="1"/>
</dbReference>
<dbReference type="InterPro" id="IPR001412">
    <property type="entry name" value="aa-tRNA-synth_I_CS"/>
</dbReference>
<dbReference type="InterPro" id="IPR002300">
    <property type="entry name" value="aa-tRNA-synth_Ia"/>
</dbReference>
<dbReference type="InterPro" id="IPR002302">
    <property type="entry name" value="Leu-tRNA-ligase"/>
</dbReference>
<dbReference type="InterPro" id="IPR025709">
    <property type="entry name" value="Leu_tRNA-synth_edit"/>
</dbReference>
<dbReference type="InterPro" id="IPR013155">
    <property type="entry name" value="M/V/L/I-tRNA-synth_anticd-bd"/>
</dbReference>
<dbReference type="InterPro" id="IPR015413">
    <property type="entry name" value="Methionyl/Leucyl_tRNA_Synth"/>
</dbReference>
<dbReference type="InterPro" id="IPR014729">
    <property type="entry name" value="Rossmann-like_a/b/a_fold"/>
</dbReference>
<dbReference type="InterPro" id="IPR009080">
    <property type="entry name" value="tRNAsynth_Ia_anticodon-bd"/>
</dbReference>
<dbReference type="InterPro" id="IPR009008">
    <property type="entry name" value="Val/Leu/Ile-tRNA-synth_edit"/>
</dbReference>
<dbReference type="NCBIfam" id="TIGR00396">
    <property type="entry name" value="leuS_bact"/>
    <property type="match status" value="1"/>
</dbReference>
<dbReference type="PANTHER" id="PTHR43740:SF2">
    <property type="entry name" value="LEUCINE--TRNA LIGASE, MITOCHONDRIAL"/>
    <property type="match status" value="1"/>
</dbReference>
<dbReference type="PANTHER" id="PTHR43740">
    <property type="entry name" value="LEUCYL-TRNA SYNTHETASE"/>
    <property type="match status" value="1"/>
</dbReference>
<dbReference type="Pfam" id="PF08264">
    <property type="entry name" value="Anticodon_1"/>
    <property type="match status" value="1"/>
</dbReference>
<dbReference type="Pfam" id="PF00133">
    <property type="entry name" value="tRNA-synt_1"/>
    <property type="match status" value="1"/>
</dbReference>
<dbReference type="Pfam" id="PF13603">
    <property type="entry name" value="tRNA-synt_1_2"/>
    <property type="match status" value="1"/>
</dbReference>
<dbReference type="Pfam" id="PF09334">
    <property type="entry name" value="tRNA-synt_1g"/>
    <property type="match status" value="1"/>
</dbReference>
<dbReference type="PRINTS" id="PR00985">
    <property type="entry name" value="TRNASYNTHLEU"/>
</dbReference>
<dbReference type="SUPFAM" id="SSF47323">
    <property type="entry name" value="Anticodon-binding domain of a subclass of class I aminoacyl-tRNA synthetases"/>
    <property type="match status" value="1"/>
</dbReference>
<dbReference type="SUPFAM" id="SSF52374">
    <property type="entry name" value="Nucleotidylyl transferase"/>
    <property type="match status" value="1"/>
</dbReference>
<dbReference type="SUPFAM" id="SSF50677">
    <property type="entry name" value="ValRS/IleRS/LeuRS editing domain"/>
    <property type="match status" value="1"/>
</dbReference>
<dbReference type="PROSITE" id="PS00178">
    <property type="entry name" value="AA_TRNA_LIGASE_I"/>
    <property type="match status" value="1"/>
</dbReference>
<gene>
    <name evidence="1" type="primary">leuS</name>
    <name type="ordered locus">FTW_0897</name>
</gene>
<accession>A4IXU1</accession>
<organism>
    <name type="scientific">Francisella tularensis subsp. tularensis (strain WY96-3418)</name>
    <dbReference type="NCBI Taxonomy" id="418136"/>
    <lineage>
        <taxon>Bacteria</taxon>
        <taxon>Pseudomonadati</taxon>
        <taxon>Pseudomonadota</taxon>
        <taxon>Gammaproteobacteria</taxon>
        <taxon>Thiotrichales</taxon>
        <taxon>Francisellaceae</taxon>
        <taxon>Francisella</taxon>
    </lineage>
</organism>
<protein>
    <recommendedName>
        <fullName evidence="1">Leucine--tRNA ligase</fullName>
        <ecNumber evidence="1">6.1.1.4</ecNumber>
    </recommendedName>
    <alternativeName>
        <fullName evidence="1">Leucyl-tRNA synthetase</fullName>
        <shortName evidence="1">LeuRS</shortName>
    </alternativeName>
</protein>
<keyword id="KW-0030">Aminoacyl-tRNA synthetase</keyword>
<keyword id="KW-0067">ATP-binding</keyword>
<keyword id="KW-0963">Cytoplasm</keyword>
<keyword id="KW-0436">Ligase</keyword>
<keyword id="KW-0547">Nucleotide-binding</keyword>
<keyword id="KW-0648">Protein biosynthesis</keyword>
<evidence type="ECO:0000255" key="1">
    <source>
        <dbReference type="HAMAP-Rule" id="MF_00049"/>
    </source>
</evidence>
<sequence>MNEYNFSDIEKSTQEYWRKNDTFKTIEDNTKEKFYCLSMLPYPSGTLHMGHVRNYTIGDVIARYQKMQGKNVLHPMGWDAFGLPAENAAIKHKKSPYEWTKSNIAYMRSQFDSLGFSFDWSREIATCDEDYYKWEQWFFIQLYKKGLAYRKNSVVNWDPVDQTVLANEQVVDGRGWRSGALVEKKEIPQWFLKITDYADELLQDINKLDNWPEAVKTMQINWIGKSKGLTVKFKVKDSNQEIEVFTTRPDTLMGVNYLGIAPEHPLALKEAKSNSQLAAFIEECKKTSTMEADLATQEKKGFKTSIKVIHPISAETIDVWVANFVLMGYGSGAVMSVPAHDQRDWEFAQKYNIPLKQVIESNDNKLKIDLEKQAFTEKGILINSGEFDGLNFKNAYQAIKKYLTEQNKGYETTNFRIHDWGISRQRYWGCPIPMIHCDDCGAVPEKEENLPVRLPTDVALTEAGSPLKDIPEFINVACPECGKPAKRETDTFDTFFESSWYYARYTCPTANQMLDQEANYWLPVDKYIGGIEHAIMHLLYARFFHKLMRDQGLVKSDEPFKNLLTQGMVLKDGAKMSKSKGNIVDPQELIDKYGADTVRLFSMFAAPPEQSLEWSETGVEGANKFLRKVFNYAELNKVIFAKNITLESQKLTKEDKKARFEIHSNLKQAIFDFDKSQFNTVVSACMKILNTLNNYDNLSESVKVEGFSILLRILAPFTPHLCHYLWQQLNLGEDILHTSFPIVDNNALEKDEFLLVVQINGKLKAKLELDASLSSNQVEEVVLADEHVKSFIDNKQVVKVIYVPQKLINIVIK</sequence>
<reference key="1">
    <citation type="journal article" date="2007" name="PLoS ONE">
        <title>Complete genomic characterization of a pathogenic A.II strain of Francisella tularensis subspecies tularensis.</title>
        <authorList>
            <person name="Beckstrom-Sternberg S.M."/>
            <person name="Auerbach R.K."/>
            <person name="Godbole S."/>
            <person name="Pearson J.V."/>
            <person name="Beckstrom-Sternberg J.S."/>
            <person name="Deng Z."/>
            <person name="Munk C."/>
            <person name="Kubota K."/>
            <person name="Zhou Y."/>
            <person name="Bruce D."/>
            <person name="Noronha J."/>
            <person name="Scheuermann R.H."/>
            <person name="Wang A."/>
            <person name="Wei X."/>
            <person name="Wang J."/>
            <person name="Hao J."/>
            <person name="Wagner D.M."/>
            <person name="Brettin T.S."/>
            <person name="Brown N."/>
            <person name="Gilna P."/>
            <person name="Keim P.S."/>
        </authorList>
    </citation>
    <scope>NUCLEOTIDE SEQUENCE [LARGE SCALE GENOMIC DNA]</scope>
    <source>
        <strain>WY96-3418</strain>
    </source>
</reference>
<name>SYL_FRATW</name>
<comment type="catalytic activity">
    <reaction evidence="1">
        <text>tRNA(Leu) + L-leucine + ATP = L-leucyl-tRNA(Leu) + AMP + diphosphate</text>
        <dbReference type="Rhea" id="RHEA:11688"/>
        <dbReference type="Rhea" id="RHEA-COMP:9613"/>
        <dbReference type="Rhea" id="RHEA-COMP:9622"/>
        <dbReference type="ChEBI" id="CHEBI:30616"/>
        <dbReference type="ChEBI" id="CHEBI:33019"/>
        <dbReference type="ChEBI" id="CHEBI:57427"/>
        <dbReference type="ChEBI" id="CHEBI:78442"/>
        <dbReference type="ChEBI" id="CHEBI:78494"/>
        <dbReference type="ChEBI" id="CHEBI:456215"/>
        <dbReference type="EC" id="6.1.1.4"/>
    </reaction>
</comment>
<comment type="subcellular location">
    <subcellularLocation>
        <location evidence="1">Cytoplasm</location>
    </subcellularLocation>
</comment>
<comment type="similarity">
    <text evidence="1">Belongs to the class-I aminoacyl-tRNA synthetase family.</text>
</comment>